<feature type="chain" id="PRO_0000189524" description="2-C-methyl-D-erythritol 2,4-cyclodiphosphate synthase">
    <location>
        <begin position="1"/>
        <end position="162"/>
    </location>
</feature>
<feature type="binding site" evidence="1">
    <location>
        <begin position="8"/>
        <end position="10"/>
    </location>
    <ligand>
        <name>4-CDP-2-C-methyl-D-erythritol 2-phosphate</name>
        <dbReference type="ChEBI" id="CHEBI:57919"/>
    </ligand>
</feature>
<feature type="binding site" evidence="1">
    <location>
        <position position="8"/>
    </location>
    <ligand>
        <name>a divalent metal cation</name>
        <dbReference type="ChEBI" id="CHEBI:60240"/>
    </ligand>
</feature>
<feature type="binding site" evidence="1">
    <location>
        <position position="10"/>
    </location>
    <ligand>
        <name>a divalent metal cation</name>
        <dbReference type="ChEBI" id="CHEBI:60240"/>
    </ligand>
</feature>
<feature type="binding site" evidence="1">
    <location>
        <begin position="36"/>
        <end position="37"/>
    </location>
    <ligand>
        <name>4-CDP-2-C-methyl-D-erythritol 2-phosphate</name>
        <dbReference type="ChEBI" id="CHEBI:57919"/>
    </ligand>
</feature>
<feature type="binding site" evidence="1">
    <location>
        <position position="44"/>
    </location>
    <ligand>
        <name>a divalent metal cation</name>
        <dbReference type="ChEBI" id="CHEBI:60240"/>
    </ligand>
</feature>
<feature type="binding site" evidence="1">
    <location>
        <begin position="58"/>
        <end position="60"/>
    </location>
    <ligand>
        <name>4-CDP-2-C-methyl-D-erythritol 2-phosphate</name>
        <dbReference type="ChEBI" id="CHEBI:57919"/>
    </ligand>
</feature>
<feature type="binding site" evidence="1">
    <location>
        <begin position="63"/>
        <end position="67"/>
    </location>
    <ligand>
        <name>4-CDP-2-C-methyl-D-erythritol 2-phosphate</name>
        <dbReference type="ChEBI" id="CHEBI:57919"/>
    </ligand>
</feature>
<feature type="binding site" evidence="1">
    <location>
        <begin position="102"/>
        <end position="108"/>
    </location>
    <ligand>
        <name>4-CDP-2-C-methyl-D-erythritol 2-phosphate</name>
        <dbReference type="ChEBI" id="CHEBI:57919"/>
    </ligand>
</feature>
<feature type="binding site" evidence="1">
    <location>
        <begin position="134"/>
        <end position="137"/>
    </location>
    <ligand>
        <name>4-CDP-2-C-methyl-D-erythritol 2-phosphate</name>
        <dbReference type="ChEBI" id="CHEBI:57919"/>
    </ligand>
</feature>
<feature type="binding site" evidence="1">
    <location>
        <position position="141"/>
    </location>
    <ligand>
        <name>4-CDP-2-C-methyl-D-erythritol 2-phosphate</name>
        <dbReference type="ChEBI" id="CHEBI:57919"/>
    </ligand>
</feature>
<feature type="binding site" evidence="1">
    <location>
        <position position="144"/>
    </location>
    <ligand>
        <name>4-CDP-2-C-methyl-D-erythritol 2-phosphate</name>
        <dbReference type="ChEBI" id="CHEBI:57919"/>
    </ligand>
</feature>
<feature type="site" description="Transition state stabilizer" evidence="1">
    <location>
        <position position="36"/>
    </location>
</feature>
<feature type="site" description="Transition state stabilizer" evidence="1">
    <location>
        <position position="135"/>
    </location>
</feature>
<gene>
    <name evidence="1" type="primary">ispF</name>
    <name type="ordered locus">YPTB0771</name>
</gene>
<accession>Q66EC2</accession>
<protein>
    <recommendedName>
        <fullName evidence="1">2-C-methyl-D-erythritol 2,4-cyclodiphosphate synthase</fullName>
        <shortName evidence="1">MECDP-synthase</shortName>
        <shortName evidence="1">MECPP-synthase</shortName>
        <shortName evidence="1">MECPS</shortName>
        <ecNumber evidence="1">4.6.1.12</ecNumber>
    </recommendedName>
</protein>
<comment type="function">
    <text evidence="1">Involved in the biosynthesis of isopentenyl diphosphate (IPP) and dimethylallyl diphosphate (DMAPP), two major building blocks of isoprenoid compounds. Catalyzes the conversion of 4-diphosphocytidyl-2-C-methyl-D-erythritol 2-phosphate (CDP-ME2P) to 2-C-methyl-D-erythritol 2,4-cyclodiphosphate (ME-CPP) with a corresponding release of cytidine 5-monophosphate (CMP).</text>
</comment>
<comment type="catalytic activity">
    <reaction evidence="1">
        <text>4-CDP-2-C-methyl-D-erythritol 2-phosphate = 2-C-methyl-D-erythritol 2,4-cyclic diphosphate + CMP</text>
        <dbReference type="Rhea" id="RHEA:23864"/>
        <dbReference type="ChEBI" id="CHEBI:57919"/>
        <dbReference type="ChEBI" id="CHEBI:58483"/>
        <dbReference type="ChEBI" id="CHEBI:60377"/>
        <dbReference type="EC" id="4.6.1.12"/>
    </reaction>
</comment>
<comment type="cofactor">
    <cofactor evidence="1">
        <name>a divalent metal cation</name>
        <dbReference type="ChEBI" id="CHEBI:60240"/>
    </cofactor>
    <text evidence="1">Binds 1 divalent metal cation per subunit.</text>
</comment>
<comment type="pathway">
    <text evidence="1">Isoprenoid biosynthesis; isopentenyl diphosphate biosynthesis via DXP pathway; isopentenyl diphosphate from 1-deoxy-D-xylulose 5-phosphate: step 4/6.</text>
</comment>
<comment type="subunit">
    <text evidence="1">Homotrimer.</text>
</comment>
<comment type="similarity">
    <text evidence="1">Belongs to the IspF family.</text>
</comment>
<proteinExistence type="inferred from homology"/>
<reference key="1">
    <citation type="journal article" date="2004" name="Proc. Natl. Acad. Sci. U.S.A.">
        <title>Insights into the evolution of Yersinia pestis through whole-genome comparison with Yersinia pseudotuberculosis.</title>
        <authorList>
            <person name="Chain P.S.G."/>
            <person name="Carniel E."/>
            <person name="Larimer F.W."/>
            <person name="Lamerdin J."/>
            <person name="Stoutland P.O."/>
            <person name="Regala W.M."/>
            <person name="Georgescu A.M."/>
            <person name="Vergez L.M."/>
            <person name="Land M.L."/>
            <person name="Motin V.L."/>
            <person name="Brubaker R.R."/>
            <person name="Fowler J."/>
            <person name="Hinnebusch J."/>
            <person name="Marceau M."/>
            <person name="Medigue C."/>
            <person name="Simonet M."/>
            <person name="Chenal-Francisque V."/>
            <person name="Souza B."/>
            <person name="Dacheux D."/>
            <person name="Elliott J.M."/>
            <person name="Derbise A."/>
            <person name="Hauser L.J."/>
            <person name="Garcia E."/>
        </authorList>
    </citation>
    <scope>NUCLEOTIDE SEQUENCE [LARGE SCALE GENOMIC DNA]</scope>
    <source>
        <strain>IP32953</strain>
    </source>
</reference>
<name>ISPF_YERPS</name>
<dbReference type="EC" id="4.6.1.12" evidence="1"/>
<dbReference type="EMBL" id="BX936398">
    <property type="protein sequence ID" value="CAH20011.1"/>
    <property type="molecule type" value="Genomic_DNA"/>
</dbReference>
<dbReference type="RefSeq" id="WP_002209392.1">
    <property type="nucleotide sequence ID" value="NZ_CP009712.1"/>
</dbReference>
<dbReference type="SMR" id="Q66EC2"/>
<dbReference type="GeneID" id="96664269"/>
<dbReference type="KEGG" id="ypo:BZ17_1785"/>
<dbReference type="KEGG" id="yps:YPTB0771"/>
<dbReference type="PATRIC" id="fig|273123.14.peg.1890"/>
<dbReference type="UniPathway" id="UPA00056">
    <property type="reaction ID" value="UER00095"/>
</dbReference>
<dbReference type="Proteomes" id="UP000001011">
    <property type="component" value="Chromosome"/>
</dbReference>
<dbReference type="GO" id="GO:0008685">
    <property type="term" value="F:2-C-methyl-D-erythritol 2,4-cyclodiphosphate synthase activity"/>
    <property type="evidence" value="ECO:0007669"/>
    <property type="project" value="UniProtKB-UniRule"/>
</dbReference>
<dbReference type="GO" id="GO:0046872">
    <property type="term" value="F:metal ion binding"/>
    <property type="evidence" value="ECO:0007669"/>
    <property type="project" value="UniProtKB-KW"/>
</dbReference>
<dbReference type="GO" id="GO:0019288">
    <property type="term" value="P:isopentenyl diphosphate biosynthetic process, methylerythritol 4-phosphate pathway"/>
    <property type="evidence" value="ECO:0007669"/>
    <property type="project" value="UniProtKB-UniRule"/>
</dbReference>
<dbReference type="GO" id="GO:0016114">
    <property type="term" value="P:terpenoid biosynthetic process"/>
    <property type="evidence" value="ECO:0007669"/>
    <property type="project" value="InterPro"/>
</dbReference>
<dbReference type="CDD" id="cd00554">
    <property type="entry name" value="MECDP_synthase"/>
    <property type="match status" value="1"/>
</dbReference>
<dbReference type="FunFam" id="3.30.1330.50:FF:000001">
    <property type="entry name" value="2-C-methyl-D-erythritol 2,4-cyclodiphosphate synthase"/>
    <property type="match status" value="1"/>
</dbReference>
<dbReference type="Gene3D" id="3.30.1330.50">
    <property type="entry name" value="2-C-methyl-D-erythritol 2,4-cyclodiphosphate synthase"/>
    <property type="match status" value="1"/>
</dbReference>
<dbReference type="HAMAP" id="MF_00107">
    <property type="entry name" value="IspF"/>
    <property type="match status" value="1"/>
</dbReference>
<dbReference type="InterPro" id="IPR003526">
    <property type="entry name" value="MECDP_synthase"/>
</dbReference>
<dbReference type="InterPro" id="IPR020555">
    <property type="entry name" value="MECDP_synthase_CS"/>
</dbReference>
<dbReference type="InterPro" id="IPR036571">
    <property type="entry name" value="MECDP_synthase_sf"/>
</dbReference>
<dbReference type="NCBIfam" id="TIGR00151">
    <property type="entry name" value="ispF"/>
    <property type="match status" value="1"/>
</dbReference>
<dbReference type="PANTHER" id="PTHR43181">
    <property type="entry name" value="2-C-METHYL-D-ERYTHRITOL 2,4-CYCLODIPHOSPHATE SYNTHASE, CHLOROPLASTIC"/>
    <property type="match status" value="1"/>
</dbReference>
<dbReference type="PANTHER" id="PTHR43181:SF1">
    <property type="entry name" value="2-C-METHYL-D-ERYTHRITOL 2,4-CYCLODIPHOSPHATE SYNTHASE, CHLOROPLASTIC"/>
    <property type="match status" value="1"/>
</dbReference>
<dbReference type="Pfam" id="PF02542">
    <property type="entry name" value="YgbB"/>
    <property type="match status" value="1"/>
</dbReference>
<dbReference type="SUPFAM" id="SSF69765">
    <property type="entry name" value="IpsF-like"/>
    <property type="match status" value="1"/>
</dbReference>
<dbReference type="PROSITE" id="PS01350">
    <property type="entry name" value="ISPF"/>
    <property type="match status" value="1"/>
</dbReference>
<organism>
    <name type="scientific">Yersinia pseudotuberculosis serotype I (strain IP32953)</name>
    <dbReference type="NCBI Taxonomy" id="273123"/>
    <lineage>
        <taxon>Bacteria</taxon>
        <taxon>Pseudomonadati</taxon>
        <taxon>Pseudomonadota</taxon>
        <taxon>Gammaproteobacteria</taxon>
        <taxon>Enterobacterales</taxon>
        <taxon>Yersiniaceae</taxon>
        <taxon>Yersinia</taxon>
    </lineage>
</organism>
<keyword id="KW-0414">Isoprene biosynthesis</keyword>
<keyword id="KW-0456">Lyase</keyword>
<keyword id="KW-0479">Metal-binding</keyword>
<evidence type="ECO:0000255" key="1">
    <source>
        <dbReference type="HAMAP-Rule" id="MF_00107"/>
    </source>
</evidence>
<sequence length="162" mass="17182">MRIGHGFDVHKFGENGSGPLIIGGVRIPYEKGLLAHSDGDVALHAATDALLGAAALGDIGKLFPDTDPAFKGADSRGLLREAYRRILAKGYKLGNLDITIIAQAPKMAPHIPQMRVNLAEDLQCHMDDINVKATTTEQLGFTGRGEGIACEAVVLLVNVEQG</sequence>